<feature type="chain" id="PRO_0000076556" description="Transcription factor TGA4">
    <location>
        <begin position="1"/>
        <end position="364"/>
    </location>
</feature>
<feature type="domain" description="bZIP" evidence="2">
    <location>
        <begin position="78"/>
        <end position="141"/>
    </location>
</feature>
<feature type="domain" description="DOG1" evidence="3">
    <location>
        <begin position="149"/>
        <end position="359"/>
    </location>
</feature>
<feature type="region of interest" description="Disordered" evidence="4">
    <location>
        <begin position="39"/>
        <end position="79"/>
    </location>
</feature>
<feature type="region of interest" description="Basic motif" evidence="2">
    <location>
        <begin position="80"/>
        <end position="100"/>
    </location>
</feature>
<feature type="region of interest" description="Leucine-zipper" evidence="2">
    <location>
        <begin position="106"/>
        <end position="120"/>
    </location>
</feature>
<feature type="coiled-coil region" evidence="1">
    <location>
        <begin position="79"/>
        <end position="127"/>
    </location>
</feature>
<feature type="coiled-coil region" evidence="1">
    <location>
        <begin position="257"/>
        <end position="277"/>
    </location>
</feature>
<feature type="compositionally biased region" description="Basic and acidic residues" evidence="4">
    <location>
        <begin position="48"/>
        <end position="79"/>
    </location>
</feature>
<feature type="disulfide bond" evidence="1">
    <location>
        <begin position="256"/>
        <end position="262"/>
    </location>
</feature>
<feature type="mutagenesis site" description="Gain of interaction with NPR1; when associated with S-262." evidence="6">
    <original>C</original>
    <variation>N</variation>
    <location>
        <position position="256"/>
    </location>
</feature>
<feature type="mutagenesis site" description="Gain of interaction with NPR1; when associated with N-256." evidence="6">
    <original>C</original>
    <variation>S</variation>
    <location>
        <position position="262"/>
    </location>
</feature>
<feature type="sequence conflict" description="In Ref. 1; CAA49524." evidence="10" ref="1">
    <original>A</original>
    <variation>S</variation>
    <location>
        <position position="265"/>
    </location>
</feature>
<name>TGA4_ARATH</name>
<comment type="function">
    <text>Transcriptional activator that binds specifically to the DNA sequence 5'-TGACG-3'. Recognizes ocs elements like the as-1 motif of the cauliflower mosaic virus 35S promoter. Binding to the as-1-like cis elements mediate auxin- and salicylic acid-inducible transcription. May be involved in the induction of the systemic acquired resistance (SAR) via its interaction with NPR1. Could also bind to the Hex-motif (5'-TGACGTGG-3') another cis-acting element found in plant histone promoters.</text>
</comment>
<comment type="subunit">
    <text evidence="5 6 8 9">Binds DNA as a dimer. Interaction with the Dof domain proteins OBP1, OBP2 or OBP3 enhances the binding to the ocs element. Interacts with RAP2-3/EPB, an ethylene-responsive element binding protein. The reduced form interacts with NPR1.</text>
</comment>
<comment type="interaction">
    <interactant intactId="EBI-541600">
        <id>Q39162</id>
    </interactant>
    <interactant intactId="EBI-1639724">
        <id>Q39057</id>
        <label>CO</label>
    </interactant>
    <organismsDiffer>false</organismsDiffer>
    <experiments>3</experiments>
</comment>
<comment type="subcellular location">
    <subcellularLocation>
        <location>Nucleus</location>
    </subcellularLocation>
</comment>
<comment type="tissue specificity">
    <text evidence="7">Predominantly expressed in roots.</text>
</comment>
<comment type="similarity">
    <text evidence="10">Belongs to the bZIP family.</text>
</comment>
<keyword id="KW-0010">Activator</keyword>
<keyword id="KW-0175">Coiled coil</keyword>
<keyword id="KW-1015">Disulfide bond</keyword>
<keyword id="KW-0238">DNA-binding</keyword>
<keyword id="KW-0539">Nucleus</keyword>
<keyword id="KW-1185">Reference proteome</keyword>
<keyword id="KW-0804">Transcription</keyword>
<keyword id="KW-0805">Transcription regulation</keyword>
<organism>
    <name type="scientific">Arabidopsis thaliana</name>
    <name type="common">Mouse-ear cress</name>
    <dbReference type="NCBI Taxonomy" id="3702"/>
    <lineage>
        <taxon>Eukaryota</taxon>
        <taxon>Viridiplantae</taxon>
        <taxon>Streptophyta</taxon>
        <taxon>Embryophyta</taxon>
        <taxon>Tracheophyta</taxon>
        <taxon>Spermatophyta</taxon>
        <taxon>Magnoliopsida</taxon>
        <taxon>eudicotyledons</taxon>
        <taxon>Gunneridae</taxon>
        <taxon>Pentapetalae</taxon>
        <taxon>rosids</taxon>
        <taxon>malvids</taxon>
        <taxon>Brassicales</taxon>
        <taxon>Brassicaceae</taxon>
        <taxon>Camelineae</taxon>
        <taxon>Arabidopsis</taxon>
    </lineage>
</organism>
<gene>
    <name type="primary">TGA4</name>
    <name type="synonym">BZIP57</name>
    <name type="synonym">OBF4</name>
    <name type="ordered locus">At5g10030</name>
    <name type="ORF">T31P16_20</name>
</gene>
<sequence length="364" mass="41751">MNTTSTHFVPPRRFEVYEPLNQIGMWEESFKNNGDMYTPGSIIIPTNEKPDSLSEDTSHGTEGTPHKFDQEASTSRHPDKIQRRLAQNREAARKSRLRKKAYVQQLETSRLKLIHLEQELDRARQQGFYVGNGVDTNALSFSDNMSSGIVAFEMEYGHWVEEQNRQICELRTVLHGQVSDIELRSLVENAMKHYFQLFRMKSAAAKIDVFYVMSGMWKTSAERFFLWIGGFRPSELLKVLLPHFDPLTDQQLLDVCNLRQSCQQAEDALSQGMEKLQHTLAESVAAGKLGEGSYIPQMTCAMERLEALVSFVNQADHLRHETLQQMHRILTTRQAARGLLALGEYFQRLRALSSSWAARQREPT</sequence>
<proteinExistence type="evidence at protein level"/>
<reference key="1">
    <citation type="journal article" date="1993" name="Plant J.">
        <title>Isolation and characterization of two related Arabidopsis ocs-element bZIP binding proteins.</title>
        <authorList>
            <person name="Zhang B."/>
            <person name="Foley R.C."/>
            <person name="Singh K.B."/>
        </authorList>
    </citation>
    <scope>NUCLEOTIDE SEQUENCE [MRNA]</scope>
    <scope>CHARACTERIZATION</scope>
    <source>
        <strain>cv. Columbia</strain>
        <tissue>Root</tissue>
    </source>
</reference>
<reference key="2">
    <citation type="journal article" date="2000" name="Nature">
        <title>Sequence and analysis of chromosome 5 of the plant Arabidopsis thaliana.</title>
        <authorList>
            <person name="Tabata S."/>
            <person name="Kaneko T."/>
            <person name="Nakamura Y."/>
            <person name="Kotani H."/>
            <person name="Kato T."/>
            <person name="Asamizu E."/>
            <person name="Miyajima N."/>
            <person name="Sasamoto S."/>
            <person name="Kimura T."/>
            <person name="Hosouchi T."/>
            <person name="Kawashima K."/>
            <person name="Kohara M."/>
            <person name="Matsumoto M."/>
            <person name="Matsuno A."/>
            <person name="Muraki A."/>
            <person name="Nakayama S."/>
            <person name="Nakazaki N."/>
            <person name="Naruo K."/>
            <person name="Okumura S."/>
            <person name="Shinpo S."/>
            <person name="Takeuchi C."/>
            <person name="Wada T."/>
            <person name="Watanabe A."/>
            <person name="Yamada M."/>
            <person name="Yasuda M."/>
            <person name="Sato S."/>
            <person name="de la Bastide M."/>
            <person name="Huang E."/>
            <person name="Spiegel L."/>
            <person name="Gnoj L."/>
            <person name="O'Shaughnessy A."/>
            <person name="Preston R."/>
            <person name="Habermann K."/>
            <person name="Murray J."/>
            <person name="Johnson D."/>
            <person name="Rohlfing T."/>
            <person name="Nelson J."/>
            <person name="Stoneking T."/>
            <person name="Pepin K."/>
            <person name="Spieth J."/>
            <person name="Sekhon M."/>
            <person name="Armstrong J."/>
            <person name="Becker M."/>
            <person name="Belter E."/>
            <person name="Cordum H."/>
            <person name="Cordes M."/>
            <person name="Courtney L."/>
            <person name="Courtney W."/>
            <person name="Dante M."/>
            <person name="Du H."/>
            <person name="Edwards J."/>
            <person name="Fryman J."/>
            <person name="Haakensen B."/>
            <person name="Lamar E."/>
            <person name="Latreille P."/>
            <person name="Leonard S."/>
            <person name="Meyer R."/>
            <person name="Mulvaney E."/>
            <person name="Ozersky P."/>
            <person name="Riley A."/>
            <person name="Strowmatt C."/>
            <person name="Wagner-McPherson C."/>
            <person name="Wollam A."/>
            <person name="Yoakum M."/>
            <person name="Bell M."/>
            <person name="Dedhia N."/>
            <person name="Parnell L."/>
            <person name="Shah R."/>
            <person name="Rodriguez M."/>
            <person name="Hoon See L."/>
            <person name="Vil D."/>
            <person name="Baker J."/>
            <person name="Kirchoff K."/>
            <person name="Toth K."/>
            <person name="King L."/>
            <person name="Bahret A."/>
            <person name="Miller B."/>
            <person name="Marra M.A."/>
            <person name="Martienssen R."/>
            <person name="McCombie W.R."/>
            <person name="Wilson R.K."/>
            <person name="Murphy G."/>
            <person name="Bancroft I."/>
            <person name="Volckaert G."/>
            <person name="Wambutt R."/>
            <person name="Duesterhoeft A."/>
            <person name="Stiekema W."/>
            <person name="Pohl T."/>
            <person name="Entian K.-D."/>
            <person name="Terryn N."/>
            <person name="Hartley N."/>
            <person name="Bent E."/>
            <person name="Johnson S."/>
            <person name="Langham S.-A."/>
            <person name="McCullagh B."/>
            <person name="Robben J."/>
            <person name="Grymonprez B."/>
            <person name="Zimmermann W."/>
            <person name="Ramsperger U."/>
            <person name="Wedler H."/>
            <person name="Balke K."/>
            <person name="Wedler E."/>
            <person name="Peters S."/>
            <person name="van Staveren M."/>
            <person name="Dirkse W."/>
            <person name="Mooijman P."/>
            <person name="Klein Lankhorst R."/>
            <person name="Weitzenegger T."/>
            <person name="Bothe G."/>
            <person name="Rose M."/>
            <person name="Hauf J."/>
            <person name="Berneiser S."/>
            <person name="Hempel S."/>
            <person name="Feldpausch M."/>
            <person name="Lamberth S."/>
            <person name="Villarroel R."/>
            <person name="Gielen J."/>
            <person name="Ardiles W."/>
            <person name="Bents O."/>
            <person name="Lemcke K."/>
            <person name="Kolesov G."/>
            <person name="Mayer K.F.X."/>
            <person name="Rudd S."/>
            <person name="Schoof H."/>
            <person name="Schueller C."/>
            <person name="Zaccaria P."/>
            <person name="Mewes H.-W."/>
            <person name="Bevan M."/>
            <person name="Fransz P.F."/>
        </authorList>
    </citation>
    <scope>NUCLEOTIDE SEQUENCE [LARGE SCALE GENOMIC DNA]</scope>
    <source>
        <strain>cv. Columbia</strain>
    </source>
</reference>
<reference key="3">
    <citation type="journal article" date="2017" name="Plant J.">
        <title>Araport11: a complete reannotation of the Arabidopsis thaliana reference genome.</title>
        <authorList>
            <person name="Cheng C.Y."/>
            <person name="Krishnakumar V."/>
            <person name="Chan A.P."/>
            <person name="Thibaud-Nissen F."/>
            <person name="Schobel S."/>
            <person name="Town C.D."/>
        </authorList>
    </citation>
    <scope>GENOME REANNOTATION</scope>
    <source>
        <strain>cv. Columbia</strain>
    </source>
</reference>
<reference key="4">
    <citation type="journal article" date="1995" name="Plant Cell">
        <title>Interactions between distinct types of DNA binding proteins enhance binding to ocs element promoter sequences.</title>
        <authorList>
            <person name="Zhang B."/>
            <person name="Chen W."/>
            <person name="Foley R.C."/>
            <person name="Buettner M."/>
            <person name="Singh K.B."/>
        </authorList>
    </citation>
    <scope>INTERACTION WITH OBP1</scope>
</reference>
<reference key="5">
    <citation type="journal article" date="1996" name="Mol. Gen. Genet.">
        <title>Binding specificity and tissue-specific expression pattern of the Arabidopsis bZIP transcription factor TGA2.</title>
        <authorList>
            <person name="de Pater S."/>
            <person name="Pham K."/>
            <person name="Memelink J."/>
            <person name="Kijne J."/>
        </authorList>
    </citation>
    <scope>TISSUE SPECIFICITY</scope>
</reference>
<reference key="6">
    <citation type="journal article" date="1997" name="Proc. Natl. Acad. Sci. U.S.A.">
        <title>Arabidopsis thaliana ethylene-responsive element binding protein (AtEBP), an ethylene-inducible, GCC box DNA-binding protein interacts with an ocs element binding protein.</title>
        <authorList>
            <person name="Buettner M."/>
            <person name="Singh K.B."/>
        </authorList>
    </citation>
    <scope>INTERACTION WITH EBP</scope>
</reference>
<reference key="7">
    <citation type="journal article" date="2000" name="Plant J.">
        <title>Characterization of salicylic acid-responsive, Arabidopsis Dof domain proteins: overexpression of OBP3 leads to growth defects.</title>
        <authorList>
            <person name="Kang H.-G."/>
            <person name="Singh K.B."/>
        </authorList>
    </citation>
    <scope>INTERACTION WITH OBP2 AND OBP3</scope>
</reference>
<reference key="8">
    <citation type="journal article" date="2002" name="Trends Plant Sci.">
        <title>bZIP transcription factors in Arabidopsis.</title>
        <authorList>
            <person name="Jakoby M."/>
            <person name="Weisshaar B."/>
            <person name="Droege-Laser W."/>
            <person name="Vicente-Carbajosa J."/>
            <person name="Tiedemann J."/>
            <person name="Kroj T."/>
            <person name="Parcy F."/>
        </authorList>
    </citation>
    <scope>GENE FAMILY</scope>
    <scope>NOMENCLATURE</scope>
</reference>
<reference key="9">
    <citation type="journal article" date="2003" name="Plant Cell">
        <title>The Arabidopsis NPR1 disease resistance protein is a novel cofactor that confers redox regulation of DNA binding activity to the basic domain/leucine zipper transcription factor TGA1.</title>
        <authorList>
            <person name="Despres C."/>
            <person name="Chubak C."/>
            <person name="Rochon A."/>
            <person name="Clark R."/>
            <person name="Bethune T."/>
            <person name="Desveaux D."/>
            <person name="Fobert P.R."/>
        </authorList>
    </citation>
    <scope>INTERACTION WITH NPR1</scope>
    <scope>MUTAGENESIS OF CYS-256 AND CYS-262</scope>
</reference>
<accession>Q39162</accession>
<accession>Q9LX25</accession>
<dbReference type="EMBL" id="X69899">
    <property type="protein sequence ID" value="CAA49524.1"/>
    <property type="molecule type" value="mRNA"/>
</dbReference>
<dbReference type="EMBL" id="AL356332">
    <property type="protein sequence ID" value="CAB92044.1"/>
    <property type="molecule type" value="Genomic_DNA"/>
</dbReference>
<dbReference type="EMBL" id="CP002688">
    <property type="protein sequence ID" value="AED91484.1"/>
    <property type="molecule type" value="Genomic_DNA"/>
</dbReference>
<dbReference type="EMBL" id="CP002688">
    <property type="protein sequence ID" value="AED91485.1"/>
    <property type="molecule type" value="Genomic_DNA"/>
</dbReference>
<dbReference type="EMBL" id="CP002688">
    <property type="protein sequence ID" value="ANM68900.1"/>
    <property type="molecule type" value="Genomic_DNA"/>
</dbReference>
<dbReference type="EMBL" id="CP002688">
    <property type="protein sequence ID" value="ANM68901.1"/>
    <property type="molecule type" value="Genomic_DNA"/>
</dbReference>
<dbReference type="EMBL" id="CP002688">
    <property type="protein sequence ID" value="ANM68902.1"/>
    <property type="molecule type" value="Genomic_DNA"/>
</dbReference>
<dbReference type="PIR" id="S48121">
    <property type="entry name" value="S48121"/>
</dbReference>
<dbReference type="PIR" id="T50007">
    <property type="entry name" value="T50007"/>
</dbReference>
<dbReference type="RefSeq" id="NP_001190270.1">
    <property type="nucleotide sequence ID" value="NM_001203341.1"/>
</dbReference>
<dbReference type="RefSeq" id="NP_001330616.1">
    <property type="nucleotide sequence ID" value="NM_001343084.1"/>
</dbReference>
<dbReference type="RefSeq" id="NP_001330617.1">
    <property type="nucleotide sequence ID" value="NM_001343085.1"/>
</dbReference>
<dbReference type="RefSeq" id="NP_001330618.1">
    <property type="nucleotide sequence ID" value="NM_001343086.1"/>
</dbReference>
<dbReference type="RefSeq" id="NP_196565.1">
    <property type="nucleotide sequence ID" value="NM_121041.5"/>
</dbReference>
<dbReference type="SMR" id="Q39162"/>
<dbReference type="BioGRID" id="16144">
    <property type="interactions" value="7"/>
</dbReference>
<dbReference type="FunCoup" id="Q39162">
    <property type="interactions" value="312"/>
</dbReference>
<dbReference type="IntAct" id="Q39162">
    <property type="interactions" value="7"/>
</dbReference>
<dbReference type="STRING" id="3702.Q39162"/>
<dbReference type="iPTMnet" id="Q39162"/>
<dbReference type="PaxDb" id="3702-AT5G10030.1"/>
<dbReference type="ProteomicsDB" id="234409"/>
<dbReference type="EnsemblPlants" id="AT5G10030.1">
    <property type="protein sequence ID" value="AT5G10030.1"/>
    <property type="gene ID" value="AT5G10030"/>
</dbReference>
<dbReference type="EnsemblPlants" id="AT5G10030.2">
    <property type="protein sequence ID" value="AT5G10030.2"/>
    <property type="gene ID" value="AT5G10030"/>
</dbReference>
<dbReference type="EnsemblPlants" id="AT5G10030.3">
    <property type="protein sequence ID" value="AT5G10030.3"/>
    <property type="gene ID" value="AT5G10030"/>
</dbReference>
<dbReference type="EnsemblPlants" id="AT5G10030.4">
    <property type="protein sequence ID" value="AT5G10030.4"/>
    <property type="gene ID" value="AT5G10030"/>
</dbReference>
<dbReference type="EnsemblPlants" id="AT5G10030.5">
    <property type="protein sequence ID" value="AT5G10030.5"/>
    <property type="gene ID" value="AT5G10030"/>
</dbReference>
<dbReference type="GeneID" id="830866"/>
<dbReference type="Gramene" id="AT5G10030.1">
    <property type="protein sequence ID" value="AT5G10030.1"/>
    <property type="gene ID" value="AT5G10030"/>
</dbReference>
<dbReference type="Gramene" id="AT5G10030.2">
    <property type="protein sequence ID" value="AT5G10030.2"/>
    <property type="gene ID" value="AT5G10030"/>
</dbReference>
<dbReference type="Gramene" id="AT5G10030.3">
    <property type="protein sequence ID" value="AT5G10030.3"/>
    <property type="gene ID" value="AT5G10030"/>
</dbReference>
<dbReference type="Gramene" id="AT5G10030.4">
    <property type="protein sequence ID" value="AT5G10030.4"/>
    <property type="gene ID" value="AT5G10030"/>
</dbReference>
<dbReference type="Gramene" id="AT5G10030.5">
    <property type="protein sequence ID" value="AT5G10030.5"/>
    <property type="gene ID" value="AT5G10030"/>
</dbReference>
<dbReference type="KEGG" id="ath:AT5G10030"/>
<dbReference type="Araport" id="AT5G10030"/>
<dbReference type="TAIR" id="AT5G10030">
    <property type="gene designation" value="TGA4"/>
</dbReference>
<dbReference type="eggNOG" id="ENOG502QS1H">
    <property type="taxonomic scope" value="Eukaryota"/>
</dbReference>
<dbReference type="HOGENOM" id="CLU_024782_1_0_1"/>
<dbReference type="InParanoid" id="Q39162"/>
<dbReference type="OMA" id="IGMWEES"/>
<dbReference type="OrthoDB" id="2015618at2759"/>
<dbReference type="PhylomeDB" id="Q39162"/>
<dbReference type="PRO" id="PR:Q39162"/>
<dbReference type="Proteomes" id="UP000006548">
    <property type="component" value="Chromosome 5"/>
</dbReference>
<dbReference type="ExpressionAtlas" id="Q39162">
    <property type="expression patterns" value="baseline and differential"/>
</dbReference>
<dbReference type="GO" id="GO:0005634">
    <property type="term" value="C:nucleus"/>
    <property type="evidence" value="ECO:0007005"/>
    <property type="project" value="TAIR"/>
</dbReference>
<dbReference type="GO" id="GO:0003700">
    <property type="term" value="F:DNA-binding transcription factor activity"/>
    <property type="evidence" value="ECO:0000250"/>
    <property type="project" value="TAIR"/>
</dbReference>
<dbReference type="GO" id="GO:0000976">
    <property type="term" value="F:transcription cis-regulatory region binding"/>
    <property type="evidence" value="ECO:0000353"/>
    <property type="project" value="TAIR"/>
</dbReference>
<dbReference type="GO" id="GO:0006351">
    <property type="term" value="P:DNA-templated transcription"/>
    <property type="evidence" value="ECO:0007669"/>
    <property type="project" value="InterPro"/>
</dbReference>
<dbReference type="FunFam" id="1.20.5.170:FF:000019">
    <property type="entry name" value="BZIP family transcription factor"/>
    <property type="match status" value="1"/>
</dbReference>
<dbReference type="Gene3D" id="1.20.5.170">
    <property type="match status" value="1"/>
</dbReference>
<dbReference type="InterPro" id="IPR004827">
    <property type="entry name" value="bZIP"/>
</dbReference>
<dbReference type="InterPro" id="IPR046347">
    <property type="entry name" value="bZIP_sf"/>
</dbReference>
<dbReference type="InterPro" id="IPR025422">
    <property type="entry name" value="TGA_domain"/>
</dbReference>
<dbReference type="PANTHER" id="PTHR45693:SF36">
    <property type="entry name" value="TRANSCRIPTION FACTOR TGA4"/>
    <property type="match status" value="1"/>
</dbReference>
<dbReference type="PANTHER" id="PTHR45693">
    <property type="entry name" value="TRANSCRIPTION FACTOR TGA9"/>
    <property type="match status" value="1"/>
</dbReference>
<dbReference type="Pfam" id="PF00170">
    <property type="entry name" value="bZIP_1"/>
    <property type="match status" value="1"/>
</dbReference>
<dbReference type="Pfam" id="PF14144">
    <property type="entry name" value="DOG1"/>
    <property type="match status" value="1"/>
</dbReference>
<dbReference type="SMART" id="SM00338">
    <property type="entry name" value="BRLZ"/>
    <property type="match status" value="1"/>
</dbReference>
<dbReference type="SUPFAM" id="SSF57959">
    <property type="entry name" value="Leucine zipper domain"/>
    <property type="match status" value="1"/>
</dbReference>
<dbReference type="PROSITE" id="PS50217">
    <property type="entry name" value="BZIP"/>
    <property type="match status" value="1"/>
</dbReference>
<dbReference type="PROSITE" id="PS00036">
    <property type="entry name" value="BZIP_BASIC"/>
    <property type="match status" value="1"/>
</dbReference>
<dbReference type="PROSITE" id="PS51806">
    <property type="entry name" value="DOG1"/>
    <property type="match status" value="1"/>
</dbReference>
<evidence type="ECO:0000255" key="1"/>
<evidence type="ECO:0000255" key="2">
    <source>
        <dbReference type="PROSITE-ProRule" id="PRU00978"/>
    </source>
</evidence>
<evidence type="ECO:0000255" key="3">
    <source>
        <dbReference type="PROSITE-ProRule" id="PRU01147"/>
    </source>
</evidence>
<evidence type="ECO:0000256" key="4">
    <source>
        <dbReference type="SAM" id="MobiDB-lite"/>
    </source>
</evidence>
<evidence type="ECO:0000269" key="5">
    <source>
    </source>
</evidence>
<evidence type="ECO:0000269" key="6">
    <source>
    </source>
</evidence>
<evidence type="ECO:0000269" key="7">
    <source>
    </source>
</evidence>
<evidence type="ECO:0000269" key="8">
    <source>
    </source>
</evidence>
<evidence type="ECO:0000269" key="9">
    <source>
    </source>
</evidence>
<evidence type="ECO:0000305" key="10"/>
<protein>
    <recommendedName>
        <fullName>Transcription factor TGA4</fullName>
    </recommendedName>
    <alternativeName>
        <fullName>Ocs element-binding factor 4</fullName>
        <shortName>OBF4</shortName>
    </alternativeName>
    <alternativeName>
        <fullName>bZIP transcription factor 57</fullName>
        <shortName>AtbZIP57</shortName>
    </alternativeName>
</protein>